<feature type="chain" id="PRO_0000056745" description="Signal-induced proliferation-associated protein 1">
    <location>
        <begin position="1"/>
        <end position="1037"/>
    </location>
</feature>
<feature type="domain" description="Rap-GAP" evidence="4">
    <location>
        <begin position="316"/>
        <end position="534"/>
    </location>
</feature>
<feature type="domain" description="PDZ" evidence="3">
    <location>
        <begin position="682"/>
        <end position="758"/>
    </location>
</feature>
<feature type="region of interest" description="Disordered" evidence="5">
    <location>
        <begin position="1"/>
        <end position="85"/>
    </location>
</feature>
<feature type="region of interest" description="Disordered" evidence="5">
    <location>
        <begin position="830"/>
        <end position="849"/>
    </location>
</feature>
<feature type="region of interest" description="Disordered" evidence="5">
    <location>
        <begin position="855"/>
        <end position="898"/>
    </location>
</feature>
<feature type="region of interest" description="Disordered" evidence="5">
    <location>
        <begin position="943"/>
        <end position="969"/>
    </location>
</feature>
<feature type="coiled-coil region" evidence="2">
    <location>
        <begin position="968"/>
        <end position="1025"/>
    </location>
</feature>
<feature type="compositionally biased region" description="Low complexity" evidence="5">
    <location>
        <begin position="871"/>
        <end position="881"/>
    </location>
</feature>
<feature type="compositionally biased region" description="Basic and acidic residues" evidence="5">
    <location>
        <begin position="952"/>
        <end position="962"/>
    </location>
</feature>
<feature type="modified residue" description="Phosphothreonine" evidence="1">
    <location>
        <position position="62"/>
    </location>
</feature>
<feature type="modified residue" description="Phosphoserine" evidence="9">
    <location>
        <position position="65"/>
    </location>
</feature>
<feature type="modified residue" description="Phosphoserine" evidence="1">
    <location>
        <position position="178"/>
    </location>
</feature>
<feature type="modified residue" description="Phosphoserine" evidence="1">
    <location>
        <position position="299"/>
    </location>
</feature>
<feature type="modified residue" description="Phosphoserine" evidence="1">
    <location>
        <position position="309"/>
    </location>
</feature>
<feature type="modified residue" description="Phosphoserine" evidence="1">
    <location>
        <position position="812"/>
    </location>
</feature>
<feature type="modified residue" description="Phosphoserine" evidence="1">
    <location>
        <position position="834"/>
    </location>
</feature>
<feature type="modified residue" description="Phosphoserine" evidence="1">
    <location>
        <position position="907"/>
    </location>
</feature>
<feature type="sequence conflict" description="In Ref. 2; BAA13469." evidence="8" ref="2">
    <original>T</original>
    <variation>A</variation>
    <location>
        <position position="738"/>
    </location>
</feature>
<feature type="sequence conflict" description="In Ref. 2; BAA13469." evidence="8" ref="2">
    <original>R</original>
    <variation>Q</variation>
    <location>
        <position position="763"/>
    </location>
</feature>
<feature type="sequence conflict" description="In Ref. 2; BAA13469." evidence="8" ref="2">
    <original>T</original>
    <variation>S</variation>
    <location>
        <position position="829"/>
    </location>
</feature>
<evidence type="ECO:0000250" key="1">
    <source>
        <dbReference type="UniProtKB" id="Q96FS4"/>
    </source>
</evidence>
<evidence type="ECO:0000255" key="2"/>
<evidence type="ECO:0000255" key="3">
    <source>
        <dbReference type="PROSITE-ProRule" id="PRU00143"/>
    </source>
</evidence>
<evidence type="ECO:0000255" key="4">
    <source>
        <dbReference type="PROSITE-ProRule" id="PRU00165"/>
    </source>
</evidence>
<evidence type="ECO:0000256" key="5">
    <source>
        <dbReference type="SAM" id="MobiDB-lite"/>
    </source>
</evidence>
<evidence type="ECO:0000269" key="6">
    <source>
    </source>
</evidence>
<evidence type="ECO:0000269" key="7">
    <source>
    </source>
</evidence>
<evidence type="ECO:0000305" key="8"/>
<evidence type="ECO:0007744" key="9">
    <source>
    </source>
</evidence>
<name>SIPA1_MOUSE</name>
<comment type="function">
    <text evidence="7">GTPase activator for the nuclear Ras-related regulatory proteins Rap1, Rsr1 and Ran in vitro, converting them to the putatively inactive GDP-bound state. Affects cell cycle progression.</text>
</comment>
<comment type="subunit">
    <text evidence="6">Interacts with RRP1B; the interaction leads to inhibition of SIPA1 GTPase activity.</text>
</comment>
<comment type="subcellular location">
    <subcellularLocation>
        <location evidence="7">Nucleus</location>
    </subcellularLocation>
    <subcellularLocation>
        <location evidence="1">Cytoplasm</location>
        <location evidence="1">Perinuclear region</location>
    </subcellularLocation>
    <subcellularLocation>
        <location>Endomembrane system</location>
        <topology evidence="1">Peripheral membrane protein</topology>
    </subcellularLocation>
    <text evidence="1">Mostly localized in the perinuclear membraneous region.</text>
</comment>
<comment type="tissue specificity">
    <text>Preferentially expressed in both fetal and adult lymphohematopoietic tissues.</text>
</comment>
<comment type="induction">
    <text>By mitogens.</text>
</comment>
<comment type="sequence caution" evidence="8">
    <conflict type="frameshift">
        <sequence resource="EMBL-CDS" id="BAA01973"/>
    </conflict>
</comment>
<comment type="sequence caution" evidence="8">
    <conflict type="erroneous initiation">
        <sequence resource="EMBL-CDS" id="BAA13469"/>
    </conflict>
</comment>
<dbReference type="EMBL" id="D11374">
    <property type="protein sequence ID" value="BAA01973.1"/>
    <property type="status" value="ALT_FRAME"/>
    <property type="molecule type" value="mRNA"/>
</dbReference>
<dbReference type="EMBL" id="D87849">
    <property type="protein sequence ID" value="BAA13469.1"/>
    <property type="status" value="ALT_INIT"/>
    <property type="molecule type" value="Genomic_DNA"/>
</dbReference>
<dbReference type="PIR" id="I49709">
    <property type="entry name" value="I49709"/>
</dbReference>
<dbReference type="SMR" id="P46062"/>
<dbReference type="FunCoup" id="P46062">
    <property type="interactions" value="265"/>
</dbReference>
<dbReference type="IntAct" id="P46062">
    <property type="interactions" value="2"/>
</dbReference>
<dbReference type="STRING" id="10090.ENSMUSP00000073618"/>
<dbReference type="GlyGen" id="P46062">
    <property type="glycosylation" value="2 sites, 1 O-linked glycan (1 site)"/>
</dbReference>
<dbReference type="iPTMnet" id="P46062"/>
<dbReference type="PhosphoSitePlus" id="P46062"/>
<dbReference type="jPOST" id="P46062"/>
<dbReference type="PaxDb" id="10090-ENSMUSP00000073618"/>
<dbReference type="PeptideAtlas" id="P46062"/>
<dbReference type="ProteomicsDB" id="257180"/>
<dbReference type="Pumba" id="P46062"/>
<dbReference type="AGR" id="MGI:107576"/>
<dbReference type="MGI" id="MGI:107576">
    <property type="gene designation" value="Sipa1"/>
</dbReference>
<dbReference type="eggNOG" id="KOG3686">
    <property type="taxonomic scope" value="Eukaryota"/>
</dbReference>
<dbReference type="InParanoid" id="P46062"/>
<dbReference type="PhylomeDB" id="P46062"/>
<dbReference type="Reactome" id="R-MMU-392517">
    <property type="pathway name" value="Rap1 signalling"/>
</dbReference>
<dbReference type="ChiTaRS" id="Sipa1">
    <property type="organism name" value="mouse"/>
</dbReference>
<dbReference type="PRO" id="PR:P46062"/>
<dbReference type="Proteomes" id="UP000000589">
    <property type="component" value="Unplaced"/>
</dbReference>
<dbReference type="RNAct" id="P46062">
    <property type="molecule type" value="protein"/>
</dbReference>
<dbReference type="GO" id="GO:0012505">
    <property type="term" value="C:endomembrane system"/>
    <property type="evidence" value="ECO:0007669"/>
    <property type="project" value="UniProtKB-SubCell"/>
</dbReference>
<dbReference type="GO" id="GO:0016020">
    <property type="term" value="C:membrane"/>
    <property type="evidence" value="ECO:0007669"/>
    <property type="project" value="UniProtKB-KW"/>
</dbReference>
<dbReference type="GO" id="GO:0005634">
    <property type="term" value="C:nucleus"/>
    <property type="evidence" value="ECO:0007669"/>
    <property type="project" value="UniProtKB-SubCell"/>
</dbReference>
<dbReference type="GO" id="GO:0048471">
    <property type="term" value="C:perinuclear region of cytoplasm"/>
    <property type="evidence" value="ECO:0007669"/>
    <property type="project" value="UniProtKB-SubCell"/>
</dbReference>
<dbReference type="GO" id="GO:0005096">
    <property type="term" value="F:GTPase activator activity"/>
    <property type="evidence" value="ECO:0007669"/>
    <property type="project" value="UniProtKB-KW"/>
</dbReference>
<dbReference type="GO" id="GO:0051726">
    <property type="term" value="P:regulation of cell cycle"/>
    <property type="evidence" value="ECO:0000314"/>
    <property type="project" value="MGI"/>
</dbReference>
<dbReference type="GO" id="GO:0051056">
    <property type="term" value="P:regulation of small GTPase mediated signal transduction"/>
    <property type="evidence" value="ECO:0007669"/>
    <property type="project" value="InterPro"/>
</dbReference>
<dbReference type="CDD" id="cd06745">
    <property type="entry name" value="PDZ_SIPA1-like"/>
    <property type="match status" value="1"/>
</dbReference>
<dbReference type="FunFam" id="2.30.42.10:FF:000176">
    <property type="entry name" value="Signal-induced proliferation-associated 1"/>
    <property type="match status" value="1"/>
</dbReference>
<dbReference type="FunFam" id="3.40.50.11210:FF:000002">
    <property type="entry name" value="Signal-induced proliferation-associated 1-like protein 1"/>
    <property type="match status" value="1"/>
</dbReference>
<dbReference type="Gene3D" id="2.30.42.10">
    <property type="match status" value="1"/>
</dbReference>
<dbReference type="Gene3D" id="6.10.140.210">
    <property type="match status" value="1"/>
</dbReference>
<dbReference type="Gene3D" id="3.40.50.11210">
    <property type="entry name" value="Rap/Ran-GAP"/>
    <property type="match status" value="1"/>
</dbReference>
<dbReference type="InterPro" id="IPR001478">
    <property type="entry name" value="PDZ"/>
</dbReference>
<dbReference type="InterPro" id="IPR036034">
    <property type="entry name" value="PDZ_sf"/>
</dbReference>
<dbReference type="InterPro" id="IPR035974">
    <property type="entry name" value="Rap/Ran-GAP_sf"/>
</dbReference>
<dbReference type="InterPro" id="IPR000331">
    <property type="entry name" value="Rap/Ran_GAP_dom"/>
</dbReference>
<dbReference type="InterPro" id="IPR050989">
    <property type="entry name" value="Rap1_Ran_GAP"/>
</dbReference>
<dbReference type="PANTHER" id="PTHR15711">
    <property type="entry name" value="RAP GTPASE-ACTIVATING PROTEIN"/>
    <property type="match status" value="1"/>
</dbReference>
<dbReference type="PANTHER" id="PTHR15711:SF14">
    <property type="entry name" value="SIGNAL-INDUCED PROLIFERATION-ASSOCIATED PROTEIN 1"/>
    <property type="match status" value="1"/>
</dbReference>
<dbReference type="Pfam" id="PF00595">
    <property type="entry name" value="PDZ"/>
    <property type="match status" value="1"/>
</dbReference>
<dbReference type="Pfam" id="PF21022">
    <property type="entry name" value="Rap-GAP_dimer"/>
    <property type="match status" value="1"/>
</dbReference>
<dbReference type="Pfam" id="PF02145">
    <property type="entry name" value="Rap_GAP"/>
    <property type="match status" value="1"/>
</dbReference>
<dbReference type="SMART" id="SM00228">
    <property type="entry name" value="PDZ"/>
    <property type="match status" value="1"/>
</dbReference>
<dbReference type="SUPFAM" id="SSF50156">
    <property type="entry name" value="PDZ domain-like"/>
    <property type="match status" value="1"/>
</dbReference>
<dbReference type="SUPFAM" id="SSF111347">
    <property type="entry name" value="Rap/Ran-GAP"/>
    <property type="match status" value="1"/>
</dbReference>
<dbReference type="PROSITE" id="PS50106">
    <property type="entry name" value="PDZ"/>
    <property type="match status" value="1"/>
</dbReference>
<dbReference type="PROSITE" id="PS50085">
    <property type="entry name" value="RAPGAP"/>
    <property type="match status" value="1"/>
</dbReference>
<sequence>MWAGGVGSPRRGMAPAPTDDLFARKLRQPARPPLTPNTFEPRPARGPLLRSGSDAGEVRPPTPASPRARAHSHEDASRPAATPTRLFTDPLALLGLPAEEPEPTFPPVLEPRWFAHYDVQSLLFDWAPRPRGTGSHTEANSGTLAEGQTTTSDLLLGAPGFVSELGGEGELGLGGPISPPVPPALPNAAVSVLEEPQTRTTTYSLEHADLGAGYYRKYFYGKEHQNFFGLDEALGPVAVSLRREEKEGSGGGTLHSYRVIVRTTQLRTLRGTISEDALPPGPPSVSPRKLLEHVAPRLSPTCLRLGSASPKVPRQLLTLDEQVLSFQRKGGILYCRAGQGSEEEMYNNQEAGAAFMQFLTLLGDVVRLKGFESYRAQLDTKTDSTGTHSLYTTYQDHEIMFHVSTMLPYTPNNQQQLLRKRHIGNDIVTIVFQEPGSKPFCPTTIRSHFQHVFLVVRAHAPCTPHTSYRVAVSRTQDTPAFGPALPEGGGPFAANADFRAFLLAKALNGEQAAGHARQFHAMATRTRQQYLQDLATNEVTTTSLDSASRFGLPSLGGRRRATPRSPGADVQAAGALMWGVRAAPGARVAAGAETSGPDDAEVPCLLGISAETLVLVAPRDGRVVFNCACRDVLAWTFSEHQLDLYHGRGEAITLRLDGAPGQAVGEVVARLQLVSRGCETRELALPRDGQGRLGFEVDAEGFITHVERFTFAETTGLRPGARLLRVCGQTLPKLGPETAAQMLRSAPKVCVTVLPPDESGRPRRSFSELYMLSLKEPSRRGGPEPVQDETGKLVILPPTKQLLHFCLKDSSSPPGPGDLTEERTEFLRTHNSLSSGSSLSDEAPVLPNTTPDLLLVTTANPSAPGTDRETPPSQDQSGSPSSHEDTSDSGPELRASILPRTLSLRNSISKIMSEAGSETLEDEWQSISEIASTCNTILESLSREGQPISESGDPKEALKCDSEPEPGSLSEKVSHLESMLWKLQEDLQREKADRAALEEEVRSLRHNNQRLLAESESAATRLLLASKHLGAPTTDLA</sequence>
<protein>
    <recommendedName>
        <fullName>Signal-induced proliferation-associated protein 1</fullName>
        <shortName>Sipa-1</shortName>
    </recommendedName>
    <alternativeName>
        <fullName>GTPase-activating protein Spa-1</fullName>
    </alternativeName>
</protein>
<gene>
    <name type="primary">Sipa1</name>
    <name type="synonym">Spa-1</name>
    <name type="synonym">Spa1</name>
</gene>
<accession>P46062</accession>
<accession>P70204</accession>
<organism>
    <name type="scientific">Mus musculus</name>
    <name type="common">Mouse</name>
    <dbReference type="NCBI Taxonomy" id="10090"/>
    <lineage>
        <taxon>Eukaryota</taxon>
        <taxon>Metazoa</taxon>
        <taxon>Chordata</taxon>
        <taxon>Craniata</taxon>
        <taxon>Vertebrata</taxon>
        <taxon>Euteleostomi</taxon>
        <taxon>Mammalia</taxon>
        <taxon>Eutheria</taxon>
        <taxon>Euarchontoglires</taxon>
        <taxon>Glires</taxon>
        <taxon>Rodentia</taxon>
        <taxon>Myomorpha</taxon>
        <taxon>Muroidea</taxon>
        <taxon>Muridae</taxon>
        <taxon>Murinae</taxon>
        <taxon>Mus</taxon>
        <taxon>Mus</taxon>
    </lineage>
</organism>
<reference key="1">
    <citation type="journal article" date="1995" name="Mol. Cell. Biol.">
        <title>Molecular cloning of a novel mitogen-inducible nuclear protein with a Ran GTPase-activating domain that affects cell cycle progression.</title>
        <authorList>
            <person name="Hattori M."/>
            <person name="Tsukamoto N."/>
            <person name="Nur-E-Kamal M.S.A."/>
            <person name="Rubinfeld B."/>
            <person name="Iwai K."/>
            <person name="Kubota H."/>
            <person name="Maruta H."/>
            <person name="Minato N."/>
        </authorList>
    </citation>
    <scope>NUCLEOTIDE SEQUENCE [MRNA]</scope>
    <scope>FUNCTION</scope>
    <scope>SUBCELLULAR LOCATION</scope>
    <source>
        <strain>BALB/cJ</strain>
    </source>
</reference>
<reference key="2">
    <citation type="journal article" date="1997" name="Genomics">
        <title>Mitogen-inducible SIPA1 is mapped to the conserved syntenic groups of chromosome 19 in mouse and chromosome 11q13.3 centromeric to BCL1 in human.</title>
        <authorList>
            <person name="Wada Y."/>
            <person name="Kubota H."/>
            <person name="Maeda M."/>
            <person name="Taniwaki M."/>
            <person name="Hattori M."/>
            <person name="Imamura S."/>
            <person name="Iwai K."/>
            <person name="Minato N."/>
        </authorList>
    </citation>
    <scope>NUCLEOTIDE SEQUENCE [GENOMIC DNA] OF 324-1037</scope>
    <source>
        <strain>DBA/2J</strain>
    </source>
</reference>
<reference key="3">
    <citation type="journal article" date="1997" name="J. Biol. Chem.">
        <title>Human SPA-1 product selectively expressed in lymphoid tissues is a specific GTPase-activating protein for Rap1 and Rap2.</title>
        <authorList>
            <person name="Kurachi H."/>
            <person name="Wada Y."/>
            <person name="Tsukamoto N."/>
            <person name="Maeda M."/>
            <person name="Kubota H."/>
            <person name="Hattori M."/>
            <person name="Iwai K."/>
            <person name="Minato N."/>
        </authorList>
    </citation>
    <scope>IDENTIFICATION OF PROBABLE FRAMESHIFTS</scope>
</reference>
<reference key="4">
    <citation type="journal article" date="2007" name="PLoS Genet.">
        <title>Rrp1b, a new candidate susceptibility gene for breast cancer progression and metastasis.</title>
        <authorList>
            <person name="Crawford N.P."/>
            <person name="Qian X."/>
            <person name="Ziogas A."/>
            <person name="Papageorge A.G."/>
            <person name="Boersma B.J."/>
            <person name="Walker R.C."/>
            <person name="Lukes L."/>
            <person name="Rowe W.L."/>
            <person name="Zhang J."/>
            <person name="Ambs S."/>
            <person name="Lowy D.R."/>
            <person name="Anton-Culver H."/>
            <person name="Hunter K.W."/>
        </authorList>
    </citation>
    <scope>INTERACTION WITH RRP1B</scope>
</reference>
<reference key="5">
    <citation type="journal article" date="2009" name="Immunity">
        <title>The phagosomal proteome in interferon-gamma-activated macrophages.</title>
        <authorList>
            <person name="Trost M."/>
            <person name="English L."/>
            <person name="Lemieux S."/>
            <person name="Courcelles M."/>
            <person name="Desjardins M."/>
            <person name="Thibault P."/>
        </authorList>
    </citation>
    <scope>IDENTIFICATION BY MASS SPECTROMETRY [LARGE SCALE ANALYSIS]</scope>
</reference>
<reference key="6">
    <citation type="journal article" date="2010" name="Cell">
        <title>A tissue-specific atlas of mouse protein phosphorylation and expression.</title>
        <authorList>
            <person name="Huttlin E.L."/>
            <person name="Jedrychowski M.P."/>
            <person name="Elias J.E."/>
            <person name="Goswami T."/>
            <person name="Rad R."/>
            <person name="Beausoleil S.A."/>
            <person name="Villen J."/>
            <person name="Haas W."/>
            <person name="Sowa M.E."/>
            <person name="Gygi S.P."/>
        </authorList>
    </citation>
    <scope>PHOSPHORYLATION [LARGE SCALE ANALYSIS] AT SER-65</scope>
    <scope>IDENTIFICATION BY MASS SPECTROMETRY [LARGE SCALE ANALYSIS]</scope>
    <source>
        <tissue>Brown adipose tissue</tissue>
        <tissue>Lung</tissue>
        <tissue>Spleen</tissue>
        <tissue>Testis</tissue>
    </source>
</reference>
<proteinExistence type="evidence at protein level"/>
<keyword id="KW-0175">Coiled coil</keyword>
<keyword id="KW-0963">Cytoplasm</keyword>
<keyword id="KW-0343">GTPase activation</keyword>
<keyword id="KW-0472">Membrane</keyword>
<keyword id="KW-0539">Nucleus</keyword>
<keyword id="KW-0597">Phosphoprotein</keyword>
<keyword id="KW-1185">Reference proteome</keyword>